<accession>B8F8L5</accession>
<dbReference type="EC" id="4.2.1.11" evidence="1"/>
<dbReference type="EMBL" id="CP001321">
    <property type="protein sequence ID" value="ACL33667.1"/>
    <property type="molecule type" value="Genomic_DNA"/>
</dbReference>
<dbReference type="RefSeq" id="WP_010785991.1">
    <property type="nucleotide sequence ID" value="NC_011852.1"/>
</dbReference>
<dbReference type="SMR" id="B8F8L5"/>
<dbReference type="STRING" id="557723.HAPS_2235"/>
<dbReference type="KEGG" id="hap:HAPS_2235"/>
<dbReference type="PATRIC" id="fig|557723.8.peg.2207"/>
<dbReference type="HOGENOM" id="CLU_031223_2_1_6"/>
<dbReference type="UniPathway" id="UPA00109">
    <property type="reaction ID" value="UER00187"/>
</dbReference>
<dbReference type="Proteomes" id="UP000006743">
    <property type="component" value="Chromosome"/>
</dbReference>
<dbReference type="GO" id="GO:0009986">
    <property type="term" value="C:cell surface"/>
    <property type="evidence" value="ECO:0007669"/>
    <property type="project" value="UniProtKB-SubCell"/>
</dbReference>
<dbReference type="GO" id="GO:0005576">
    <property type="term" value="C:extracellular region"/>
    <property type="evidence" value="ECO:0007669"/>
    <property type="project" value="UniProtKB-SubCell"/>
</dbReference>
<dbReference type="GO" id="GO:0000015">
    <property type="term" value="C:phosphopyruvate hydratase complex"/>
    <property type="evidence" value="ECO:0007669"/>
    <property type="project" value="InterPro"/>
</dbReference>
<dbReference type="GO" id="GO:0000287">
    <property type="term" value="F:magnesium ion binding"/>
    <property type="evidence" value="ECO:0007669"/>
    <property type="project" value="UniProtKB-UniRule"/>
</dbReference>
<dbReference type="GO" id="GO:0004634">
    <property type="term" value="F:phosphopyruvate hydratase activity"/>
    <property type="evidence" value="ECO:0007669"/>
    <property type="project" value="UniProtKB-UniRule"/>
</dbReference>
<dbReference type="GO" id="GO:0006096">
    <property type="term" value="P:glycolytic process"/>
    <property type="evidence" value="ECO:0007669"/>
    <property type="project" value="UniProtKB-UniRule"/>
</dbReference>
<dbReference type="CDD" id="cd03313">
    <property type="entry name" value="enolase"/>
    <property type="match status" value="1"/>
</dbReference>
<dbReference type="FunFam" id="3.20.20.120:FF:000001">
    <property type="entry name" value="Enolase"/>
    <property type="match status" value="1"/>
</dbReference>
<dbReference type="FunFam" id="3.30.390.10:FF:000001">
    <property type="entry name" value="Enolase"/>
    <property type="match status" value="1"/>
</dbReference>
<dbReference type="Gene3D" id="3.20.20.120">
    <property type="entry name" value="Enolase-like C-terminal domain"/>
    <property type="match status" value="1"/>
</dbReference>
<dbReference type="Gene3D" id="3.30.390.10">
    <property type="entry name" value="Enolase-like, N-terminal domain"/>
    <property type="match status" value="1"/>
</dbReference>
<dbReference type="HAMAP" id="MF_00318">
    <property type="entry name" value="Enolase"/>
    <property type="match status" value="1"/>
</dbReference>
<dbReference type="InterPro" id="IPR000941">
    <property type="entry name" value="Enolase"/>
</dbReference>
<dbReference type="InterPro" id="IPR036849">
    <property type="entry name" value="Enolase-like_C_sf"/>
</dbReference>
<dbReference type="InterPro" id="IPR029017">
    <property type="entry name" value="Enolase-like_N"/>
</dbReference>
<dbReference type="InterPro" id="IPR020810">
    <property type="entry name" value="Enolase_C"/>
</dbReference>
<dbReference type="InterPro" id="IPR020809">
    <property type="entry name" value="Enolase_CS"/>
</dbReference>
<dbReference type="InterPro" id="IPR020811">
    <property type="entry name" value="Enolase_N"/>
</dbReference>
<dbReference type="NCBIfam" id="TIGR01060">
    <property type="entry name" value="eno"/>
    <property type="match status" value="1"/>
</dbReference>
<dbReference type="PANTHER" id="PTHR11902">
    <property type="entry name" value="ENOLASE"/>
    <property type="match status" value="1"/>
</dbReference>
<dbReference type="PANTHER" id="PTHR11902:SF1">
    <property type="entry name" value="ENOLASE"/>
    <property type="match status" value="1"/>
</dbReference>
<dbReference type="Pfam" id="PF00113">
    <property type="entry name" value="Enolase_C"/>
    <property type="match status" value="1"/>
</dbReference>
<dbReference type="Pfam" id="PF03952">
    <property type="entry name" value="Enolase_N"/>
    <property type="match status" value="1"/>
</dbReference>
<dbReference type="PIRSF" id="PIRSF001400">
    <property type="entry name" value="Enolase"/>
    <property type="match status" value="1"/>
</dbReference>
<dbReference type="PRINTS" id="PR00148">
    <property type="entry name" value="ENOLASE"/>
</dbReference>
<dbReference type="SFLD" id="SFLDS00001">
    <property type="entry name" value="Enolase"/>
    <property type="match status" value="1"/>
</dbReference>
<dbReference type="SFLD" id="SFLDF00002">
    <property type="entry name" value="enolase"/>
    <property type="match status" value="1"/>
</dbReference>
<dbReference type="SMART" id="SM01192">
    <property type="entry name" value="Enolase_C"/>
    <property type="match status" value="1"/>
</dbReference>
<dbReference type="SMART" id="SM01193">
    <property type="entry name" value="Enolase_N"/>
    <property type="match status" value="1"/>
</dbReference>
<dbReference type="SUPFAM" id="SSF51604">
    <property type="entry name" value="Enolase C-terminal domain-like"/>
    <property type="match status" value="1"/>
</dbReference>
<dbReference type="SUPFAM" id="SSF54826">
    <property type="entry name" value="Enolase N-terminal domain-like"/>
    <property type="match status" value="1"/>
</dbReference>
<dbReference type="PROSITE" id="PS00164">
    <property type="entry name" value="ENOLASE"/>
    <property type="match status" value="1"/>
</dbReference>
<gene>
    <name evidence="1" type="primary">eno</name>
    <name type="ordered locus">HAPS_2235</name>
</gene>
<reference key="1">
    <citation type="journal article" date="2009" name="J. Bacteriol.">
        <title>Complete genome sequence of Haemophilus parasuis SH0165.</title>
        <authorList>
            <person name="Yue M."/>
            <person name="Yang F."/>
            <person name="Yang J."/>
            <person name="Bei W."/>
            <person name="Cai X."/>
            <person name="Chen L."/>
            <person name="Dong J."/>
            <person name="Zhou R."/>
            <person name="Jin M."/>
            <person name="Jin Q."/>
            <person name="Chen H."/>
        </authorList>
    </citation>
    <scope>NUCLEOTIDE SEQUENCE [LARGE SCALE GENOMIC DNA]</scope>
    <source>
        <strain>SH0165</strain>
    </source>
</reference>
<feature type="chain" id="PRO_1000189952" description="Enolase">
    <location>
        <begin position="1"/>
        <end position="436"/>
    </location>
</feature>
<feature type="active site" description="Proton donor" evidence="1">
    <location>
        <position position="209"/>
    </location>
</feature>
<feature type="active site" description="Proton acceptor" evidence="1">
    <location>
        <position position="343"/>
    </location>
</feature>
<feature type="binding site" evidence="1">
    <location>
        <position position="167"/>
    </location>
    <ligand>
        <name>(2R)-2-phosphoglycerate</name>
        <dbReference type="ChEBI" id="CHEBI:58289"/>
    </ligand>
</feature>
<feature type="binding site" evidence="1">
    <location>
        <position position="246"/>
    </location>
    <ligand>
        <name>Mg(2+)</name>
        <dbReference type="ChEBI" id="CHEBI:18420"/>
    </ligand>
</feature>
<feature type="binding site" evidence="1">
    <location>
        <position position="291"/>
    </location>
    <ligand>
        <name>Mg(2+)</name>
        <dbReference type="ChEBI" id="CHEBI:18420"/>
    </ligand>
</feature>
<feature type="binding site" evidence="1">
    <location>
        <position position="318"/>
    </location>
    <ligand>
        <name>Mg(2+)</name>
        <dbReference type="ChEBI" id="CHEBI:18420"/>
    </ligand>
</feature>
<feature type="binding site" evidence="1">
    <location>
        <position position="343"/>
    </location>
    <ligand>
        <name>(2R)-2-phosphoglycerate</name>
        <dbReference type="ChEBI" id="CHEBI:58289"/>
    </ligand>
</feature>
<feature type="binding site" evidence="1">
    <location>
        <position position="372"/>
    </location>
    <ligand>
        <name>(2R)-2-phosphoglycerate</name>
        <dbReference type="ChEBI" id="CHEBI:58289"/>
    </ligand>
</feature>
<feature type="binding site" evidence="1">
    <location>
        <position position="373"/>
    </location>
    <ligand>
        <name>(2R)-2-phosphoglycerate</name>
        <dbReference type="ChEBI" id="CHEBI:58289"/>
    </ligand>
</feature>
<feature type="binding site" evidence="1">
    <location>
        <position position="394"/>
    </location>
    <ligand>
        <name>(2R)-2-phosphoglycerate</name>
        <dbReference type="ChEBI" id="CHEBI:58289"/>
    </ligand>
</feature>
<keyword id="KW-0963">Cytoplasm</keyword>
<keyword id="KW-0324">Glycolysis</keyword>
<keyword id="KW-0456">Lyase</keyword>
<keyword id="KW-0460">Magnesium</keyword>
<keyword id="KW-0479">Metal-binding</keyword>
<keyword id="KW-1185">Reference proteome</keyword>
<keyword id="KW-0964">Secreted</keyword>
<proteinExistence type="inferred from homology"/>
<evidence type="ECO:0000255" key="1">
    <source>
        <dbReference type="HAMAP-Rule" id="MF_00318"/>
    </source>
</evidence>
<organism>
    <name type="scientific">Glaesserella parasuis serovar 5 (strain SH0165)</name>
    <name type="common">Haemophilus parasuis</name>
    <dbReference type="NCBI Taxonomy" id="557723"/>
    <lineage>
        <taxon>Bacteria</taxon>
        <taxon>Pseudomonadati</taxon>
        <taxon>Pseudomonadota</taxon>
        <taxon>Gammaproteobacteria</taxon>
        <taxon>Pasteurellales</taxon>
        <taxon>Pasteurellaceae</taxon>
        <taxon>Glaesserella</taxon>
    </lineage>
</organism>
<name>ENO_GLAP5</name>
<protein>
    <recommendedName>
        <fullName evidence="1">Enolase</fullName>
        <ecNumber evidence="1">4.2.1.11</ecNumber>
    </recommendedName>
    <alternativeName>
        <fullName evidence="1">2-phospho-D-glycerate hydro-lyase</fullName>
    </alternativeName>
    <alternativeName>
        <fullName evidence="1">2-phosphoglycerate dehydratase</fullName>
    </alternativeName>
</protein>
<sequence>MAKIVKVIGREIIDSRGNPTVEAEVHLEGGFVGLAAAPSGASTGSREALELRDGDKARFLGKGVLKAVSAVNNEIAHAIVGKDASNQAEIDQIMIDLDGTDNKSKFGANAILAVSLANAKAAAASKGLPLYAHIAELNGTPGVYSMPLPMMNIINGGEHADNNVDIQEFMIQPVGASTLKEALRIGAEVFHNLAKVLKAKGLNTAVGDEGGFAPNLASNADALACIKEAVEKAGYVLGKDVTLAMDCASSEFYNKDNGLYEMKGEGKSFTSQEFTHYLEGLCKEYPIVSIEDGQDESDWEGFAYQTKVLGDKVQLVGDDLFVTNTKILSRGIENGIANSILIKFNQIGSLTETLAAIKMAKDAGYTAVISHRSGETEDATIADLAVGTAAGQIKTGSMSRSDRVAKYNQLIRIEEALAAAGTPAPFNGRKEVKGQA</sequence>
<comment type="function">
    <text evidence="1">Catalyzes the reversible conversion of 2-phosphoglycerate (2-PG) into phosphoenolpyruvate (PEP). It is essential for the degradation of carbohydrates via glycolysis.</text>
</comment>
<comment type="catalytic activity">
    <reaction evidence="1">
        <text>(2R)-2-phosphoglycerate = phosphoenolpyruvate + H2O</text>
        <dbReference type="Rhea" id="RHEA:10164"/>
        <dbReference type="ChEBI" id="CHEBI:15377"/>
        <dbReference type="ChEBI" id="CHEBI:58289"/>
        <dbReference type="ChEBI" id="CHEBI:58702"/>
        <dbReference type="EC" id="4.2.1.11"/>
    </reaction>
</comment>
<comment type="cofactor">
    <cofactor evidence="1">
        <name>Mg(2+)</name>
        <dbReference type="ChEBI" id="CHEBI:18420"/>
    </cofactor>
    <text evidence="1">Binds a second Mg(2+) ion via substrate during catalysis.</text>
</comment>
<comment type="pathway">
    <text evidence="1">Carbohydrate degradation; glycolysis; pyruvate from D-glyceraldehyde 3-phosphate: step 4/5.</text>
</comment>
<comment type="subunit">
    <text evidence="1">Component of the RNA degradosome, a multiprotein complex involved in RNA processing and mRNA degradation.</text>
</comment>
<comment type="subcellular location">
    <subcellularLocation>
        <location evidence="1">Cytoplasm</location>
    </subcellularLocation>
    <subcellularLocation>
        <location evidence="1">Secreted</location>
    </subcellularLocation>
    <subcellularLocation>
        <location evidence="1">Cell surface</location>
    </subcellularLocation>
    <text evidence="1">Fractions of enolase are present in both the cytoplasm and on the cell surface.</text>
</comment>
<comment type="similarity">
    <text evidence="1">Belongs to the enolase family.</text>
</comment>